<proteinExistence type="evidence at protein level"/>
<feature type="initiator methionine" description="Removed" evidence="2">
    <location>
        <position position="1"/>
    </location>
</feature>
<feature type="chain" id="PRO_0000305844" description="Bifunctional protein FolD">
    <location>
        <begin position="2"/>
        <end position="283"/>
    </location>
</feature>
<feature type="binding site" evidence="1">
    <location>
        <begin position="165"/>
        <end position="167"/>
    </location>
    <ligand>
        <name>NADP(+)</name>
        <dbReference type="ChEBI" id="CHEBI:58349"/>
    </ligand>
</feature>
<feature type="binding site" evidence="1">
    <location>
        <position position="192"/>
    </location>
    <ligand>
        <name>NADP(+)</name>
        <dbReference type="ChEBI" id="CHEBI:58349"/>
    </ligand>
</feature>
<feature type="binding site" evidence="1">
    <location>
        <position position="233"/>
    </location>
    <ligand>
        <name>NADP(+)</name>
        <dbReference type="ChEBI" id="CHEBI:58349"/>
    </ligand>
</feature>
<dbReference type="EC" id="1.5.1.5" evidence="1"/>
<dbReference type="EC" id="3.5.4.9" evidence="1"/>
<dbReference type="EMBL" id="CP000480">
    <property type="protein sequence ID" value="ABK69727.1"/>
    <property type="molecule type" value="Genomic_DNA"/>
</dbReference>
<dbReference type="EMBL" id="CP001663">
    <property type="protein sequence ID" value="AFP38080.1"/>
    <property type="molecule type" value="Genomic_DNA"/>
</dbReference>
<dbReference type="RefSeq" id="WP_003893053.1">
    <property type="nucleotide sequence ID" value="NZ_SIJM01000023.1"/>
</dbReference>
<dbReference type="RefSeq" id="YP_886023.1">
    <property type="nucleotide sequence ID" value="NC_008596.1"/>
</dbReference>
<dbReference type="SMR" id="A0QSY5"/>
<dbReference type="STRING" id="246196.MSMEG_1647"/>
<dbReference type="PaxDb" id="246196-MSMEI_1607"/>
<dbReference type="KEGG" id="msb:LJ00_08220"/>
<dbReference type="KEGG" id="msg:MSMEI_1607"/>
<dbReference type="KEGG" id="msm:MSMEG_1647"/>
<dbReference type="PATRIC" id="fig|246196.19.peg.1631"/>
<dbReference type="eggNOG" id="COG0190">
    <property type="taxonomic scope" value="Bacteria"/>
</dbReference>
<dbReference type="OrthoDB" id="9803580at2"/>
<dbReference type="UniPathway" id="UPA00193"/>
<dbReference type="Proteomes" id="UP000000757">
    <property type="component" value="Chromosome"/>
</dbReference>
<dbReference type="Proteomes" id="UP000006158">
    <property type="component" value="Chromosome"/>
</dbReference>
<dbReference type="GO" id="GO:0005829">
    <property type="term" value="C:cytosol"/>
    <property type="evidence" value="ECO:0007669"/>
    <property type="project" value="TreeGrafter"/>
</dbReference>
<dbReference type="GO" id="GO:0004477">
    <property type="term" value="F:methenyltetrahydrofolate cyclohydrolase activity"/>
    <property type="evidence" value="ECO:0007669"/>
    <property type="project" value="UniProtKB-UniRule"/>
</dbReference>
<dbReference type="GO" id="GO:0004488">
    <property type="term" value="F:methylenetetrahydrofolate dehydrogenase (NADP+) activity"/>
    <property type="evidence" value="ECO:0007669"/>
    <property type="project" value="UniProtKB-UniRule"/>
</dbReference>
<dbReference type="GO" id="GO:0000105">
    <property type="term" value="P:L-histidine biosynthetic process"/>
    <property type="evidence" value="ECO:0007669"/>
    <property type="project" value="UniProtKB-KW"/>
</dbReference>
<dbReference type="GO" id="GO:0009086">
    <property type="term" value="P:methionine biosynthetic process"/>
    <property type="evidence" value="ECO:0007669"/>
    <property type="project" value="UniProtKB-KW"/>
</dbReference>
<dbReference type="GO" id="GO:0006164">
    <property type="term" value="P:purine nucleotide biosynthetic process"/>
    <property type="evidence" value="ECO:0007669"/>
    <property type="project" value="UniProtKB-KW"/>
</dbReference>
<dbReference type="GO" id="GO:0035999">
    <property type="term" value="P:tetrahydrofolate interconversion"/>
    <property type="evidence" value="ECO:0007669"/>
    <property type="project" value="UniProtKB-UniRule"/>
</dbReference>
<dbReference type="CDD" id="cd01080">
    <property type="entry name" value="NAD_bind_m-THF_DH_Cyclohyd"/>
    <property type="match status" value="1"/>
</dbReference>
<dbReference type="FunFam" id="3.40.50.720:FF:000094">
    <property type="entry name" value="Bifunctional protein FolD"/>
    <property type="match status" value="1"/>
</dbReference>
<dbReference type="FunFam" id="3.40.50.10860:FF:000005">
    <property type="entry name" value="C-1-tetrahydrofolate synthase, cytoplasmic, putative"/>
    <property type="match status" value="1"/>
</dbReference>
<dbReference type="Gene3D" id="3.40.50.10860">
    <property type="entry name" value="Leucine Dehydrogenase, chain A, domain 1"/>
    <property type="match status" value="1"/>
</dbReference>
<dbReference type="Gene3D" id="3.40.50.720">
    <property type="entry name" value="NAD(P)-binding Rossmann-like Domain"/>
    <property type="match status" value="1"/>
</dbReference>
<dbReference type="HAMAP" id="MF_01576">
    <property type="entry name" value="THF_DHG_CYH"/>
    <property type="match status" value="1"/>
</dbReference>
<dbReference type="InterPro" id="IPR046346">
    <property type="entry name" value="Aminoacid_DH-like_N_sf"/>
</dbReference>
<dbReference type="InterPro" id="IPR036291">
    <property type="entry name" value="NAD(P)-bd_dom_sf"/>
</dbReference>
<dbReference type="InterPro" id="IPR000672">
    <property type="entry name" value="THF_DH/CycHdrlase"/>
</dbReference>
<dbReference type="InterPro" id="IPR020630">
    <property type="entry name" value="THF_DH/CycHdrlase_cat_dom"/>
</dbReference>
<dbReference type="InterPro" id="IPR020631">
    <property type="entry name" value="THF_DH/CycHdrlase_NAD-bd_dom"/>
</dbReference>
<dbReference type="NCBIfam" id="NF010789">
    <property type="entry name" value="PRK14193.1"/>
    <property type="match status" value="1"/>
</dbReference>
<dbReference type="PANTHER" id="PTHR48099:SF5">
    <property type="entry name" value="C-1-TETRAHYDROFOLATE SYNTHASE, CYTOPLASMIC"/>
    <property type="match status" value="1"/>
</dbReference>
<dbReference type="PANTHER" id="PTHR48099">
    <property type="entry name" value="C-1-TETRAHYDROFOLATE SYNTHASE, CYTOPLASMIC-RELATED"/>
    <property type="match status" value="1"/>
</dbReference>
<dbReference type="Pfam" id="PF00763">
    <property type="entry name" value="THF_DHG_CYH"/>
    <property type="match status" value="1"/>
</dbReference>
<dbReference type="Pfam" id="PF02882">
    <property type="entry name" value="THF_DHG_CYH_C"/>
    <property type="match status" value="1"/>
</dbReference>
<dbReference type="PRINTS" id="PR00085">
    <property type="entry name" value="THFDHDRGNASE"/>
</dbReference>
<dbReference type="SUPFAM" id="SSF53223">
    <property type="entry name" value="Aminoacid dehydrogenase-like, N-terminal domain"/>
    <property type="match status" value="1"/>
</dbReference>
<dbReference type="SUPFAM" id="SSF51735">
    <property type="entry name" value="NAD(P)-binding Rossmann-fold domains"/>
    <property type="match status" value="1"/>
</dbReference>
<comment type="function">
    <text evidence="1">Catalyzes the oxidation of 5,10-methylenetetrahydrofolate to 5,10-methenyltetrahydrofolate and then the hydrolysis of 5,10-methenyltetrahydrofolate to 10-formyltetrahydrofolate.</text>
</comment>
<comment type="catalytic activity">
    <reaction evidence="1">
        <text>(6R)-5,10-methylene-5,6,7,8-tetrahydrofolate + NADP(+) = (6R)-5,10-methenyltetrahydrofolate + NADPH</text>
        <dbReference type="Rhea" id="RHEA:22812"/>
        <dbReference type="ChEBI" id="CHEBI:15636"/>
        <dbReference type="ChEBI" id="CHEBI:57455"/>
        <dbReference type="ChEBI" id="CHEBI:57783"/>
        <dbReference type="ChEBI" id="CHEBI:58349"/>
        <dbReference type="EC" id="1.5.1.5"/>
    </reaction>
</comment>
<comment type="catalytic activity">
    <reaction evidence="1">
        <text>(6R)-5,10-methenyltetrahydrofolate + H2O = (6R)-10-formyltetrahydrofolate + H(+)</text>
        <dbReference type="Rhea" id="RHEA:23700"/>
        <dbReference type="ChEBI" id="CHEBI:15377"/>
        <dbReference type="ChEBI" id="CHEBI:15378"/>
        <dbReference type="ChEBI" id="CHEBI:57455"/>
        <dbReference type="ChEBI" id="CHEBI:195366"/>
        <dbReference type="EC" id="3.5.4.9"/>
    </reaction>
</comment>
<comment type="pathway">
    <text evidence="1">One-carbon metabolism; tetrahydrofolate interconversion.</text>
</comment>
<comment type="subunit">
    <text evidence="1">Homodimer.</text>
</comment>
<comment type="similarity">
    <text evidence="1">Belongs to the tetrahydrofolate dehydrogenase/cyclohydrolase family.</text>
</comment>
<gene>
    <name evidence="1" type="primary">folD</name>
    <name type="ordered locus">MSMEG_1647</name>
    <name type="ordered locus">MSMEI_1607</name>
</gene>
<evidence type="ECO:0000255" key="1">
    <source>
        <dbReference type="HAMAP-Rule" id="MF_01576"/>
    </source>
</evidence>
<evidence type="ECO:0000269" key="2">
    <source>
    </source>
</evidence>
<keyword id="KW-0028">Amino-acid biosynthesis</keyword>
<keyword id="KW-0368">Histidine biosynthesis</keyword>
<keyword id="KW-0378">Hydrolase</keyword>
<keyword id="KW-0486">Methionine biosynthesis</keyword>
<keyword id="KW-0511">Multifunctional enzyme</keyword>
<keyword id="KW-0521">NADP</keyword>
<keyword id="KW-0554">One-carbon metabolism</keyword>
<keyword id="KW-0560">Oxidoreductase</keyword>
<keyword id="KW-0658">Purine biosynthesis</keyword>
<keyword id="KW-1185">Reference proteome</keyword>
<name>FOLD_MYCS2</name>
<reference key="1">
    <citation type="submission" date="2006-10" db="EMBL/GenBank/DDBJ databases">
        <authorList>
            <person name="Fleischmann R.D."/>
            <person name="Dodson R.J."/>
            <person name="Haft D.H."/>
            <person name="Merkel J.S."/>
            <person name="Nelson W.C."/>
            <person name="Fraser C.M."/>
        </authorList>
    </citation>
    <scope>NUCLEOTIDE SEQUENCE [LARGE SCALE GENOMIC DNA]</scope>
    <source>
        <strain>ATCC 700084 / mc(2)155</strain>
    </source>
</reference>
<reference key="2">
    <citation type="journal article" date="2007" name="Genome Biol.">
        <title>Interrupted coding sequences in Mycobacterium smegmatis: authentic mutations or sequencing errors?</title>
        <authorList>
            <person name="Deshayes C."/>
            <person name="Perrodou E."/>
            <person name="Gallien S."/>
            <person name="Euphrasie D."/>
            <person name="Schaeffer C."/>
            <person name="Van-Dorsselaer A."/>
            <person name="Poch O."/>
            <person name="Lecompte O."/>
            <person name="Reyrat J.-M."/>
        </authorList>
    </citation>
    <scope>NUCLEOTIDE SEQUENCE [LARGE SCALE GENOMIC DNA]</scope>
    <source>
        <strain>ATCC 700084 / mc(2)155</strain>
    </source>
</reference>
<reference key="3">
    <citation type="journal article" date="2009" name="Genome Res.">
        <title>Ortho-proteogenomics: multiple proteomes investigation through orthology and a new MS-based protocol.</title>
        <authorList>
            <person name="Gallien S."/>
            <person name="Perrodou E."/>
            <person name="Carapito C."/>
            <person name="Deshayes C."/>
            <person name="Reyrat J.-M."/>
            <person name="Van Dorsselaer A."/>
            <person name="Poch O."/>
            <person name="Schaeffer C."/>
            <person name="Lecompte O."/>
        </authorList>
    </citation>
    <scope>NUCLEOTIDE SEQUENCE [LARGE SCALE GENOMIC DNA]</scope>
    <scope>IDENTIFICATION BY MASS SPECTROMETRY [LARGE SCALE ANALYSIS]</scope>
    <scope>CLEAVAGE OF INITIATOR METHIONINE</scope>
    <source>
        <strain>ATCC 700084 / mc(2)155</strain>
    </source>
</reference>
<organism>
    <name type="scientific">Mycolicibacterium smegmatis (strain ATCC 700084 / mc(2)155)</name>
    <name type="common">Mycobacterium smegmatis</name>
    <dbReference type="NCBI Taxonomy" id="246196"/>
    <lineage>
        <taxon>Bacteria</taxon>
        <taxon>Bacillati</taxon>
        <taxon>Actinomycetota</taxon>
        <taxon>Actinomycetes</taxon>
        <taxon>Mycobacteriales</taxon>
        <taxon>Mycobacteriaceae</taxon>
        <taxon>Mycolicibacterium</taxon>
    </lineage>
</organism>
<accession>A0QSY5</accession>
<accession>I7F936</accession>
<sequence>MGAISLDGKTTRDEIFVDLKERVAALTAAGRTPGLGTVLVGDDPGSQAYVRGKHADCAKVGINSIRRDLPADITTEQLNETIDELNANPDCTGYIVQLPLPKHLDENAALERIDPAKDADGLHPTNLGRLVLGKQAALPCTPRGIVHLLRRFDVPIAGAHVVVIGRGVTVGRPMGLLLTRRSENATVTLCHTGTRDLPALTRQADIIIAAVGVPHMVTADMVKPGAAVVDVGVSRVDGKLTGDVAPDVWEVAGHVSPNPGGVGPLTRAFLLTNVVEAEESKLA</sequence>
<protein>
    <recommendedName>
        <fullName evidence="1">Bifunctional protein FolD</fullName>
    </recommendedName>
    <domain>
        <recommendedName>
            <fullName evidence="1">Methylenetetrahydrofolate dehydrogenase</fullName>
            <ecNumber evidence="1">1.5.1.5</ecNumber>
        </recommendedName>
    </domain>
    <domain>
        <recommendedName>
            <fullName evidence="1">Methenyltetrahydrofolate cyclohydrolase</fullName>
            <ecNumber evidence="1">3.5.4.9</ecNumber>
        </recommendedName>
    </domain>
</protein>